<organism>
    <name type="scientific">Chlamydia caviae (strain ATCC VR-813 / DSM 19441 / 03DC25 / GPIC)</name>
    <name type="common">Chlamydophila caviae</name>
    <dbReference type="NCBI Taxonomy" id="227941"/>
    <lineage>
        <taxon>Bacteria</taxon>
        <taxon>Pseudomonadati</taxon>
        <taxon>Chlamydiota</taxon>
        <taxon>Chlamydiia</taxon>
        <taxon>Chlamydiales</taxon>
        <taxon>Chlamydiaceae</taxon>
        <taxon>Chlamydia/Chlamydophila group</taxon>
        <taxon>Chlamydia</taxon>
    </lineage>
</organism>
<evidence type="ECO:0000255" key="1">
    <source>
        <dbReference type="HAMAP-Rule" id="MF_00600"/>
    </source>
</evidence>
<gene>
    <name evidence="1" type="primary">groEL1</name>
    <name type="synonym">groL</name>
    <name evidence="1" type="synonym">groL1</name>
    <name type="synonym">hypB</name>
    <name type="synonym">mopA</name>
    <name type="ordered locus">CCA_00643</name>
</gene>
<protein>
    <recommendedName>
        <fullName evidence="1">Chaperonin GroEL 1</fullName>
        <ecNumber evidence="1">5.6.1.7</ecNumber>
    </recommendedName>
    <alternativeName>
        <fullName evidence="1">60 kDa chaperonin 1</fullName>
    </alternativeName>
    <alternativeName>
        <fullName evidence="1">Chaperonin-60 1</fullName>
        <shortName evidence="1">Cpn60 1</shortName>
    </alternativeName>
</protein>
<sequence>MAAKNIKYNEDARKKIHKGVKTLAEAVKVTLGPKGRHVVIDKSFGSPQVTKDGVTVAKEIELEDKHENMGAQMVKEVASKTADKAGDGTTTATVLAEAIYSEGLRNVTAGANPMDLKRGIDKAVKVVVDEIKKISKPVQHHKEIAQVATISANNDAEIGNLIAEAMEKVGKNGSITVEEAKGFETVLDVVEGMNFNRGYLSSYFSTNPETQECVLEEALVLIYDKKISGIKDFLPVLQQVAESGRPLLIIAEDIEGEALATLVVNRLRAGFRVCAVKAPGFGDRRKAMLEDIAILTGGQLISEELGMKLENTTLAMLGKAKKVIVSKEDTTIVEGLGSKEDIESRCESIKKQIEDSTSDYDKEKLQERLAKLSGGVAVIRVGAATEIEMKEKKDRVDDAQHATLAAVEEGILPGGGTALVRCIPTLEAFIPILTNEDEQIGARIVLKALSAPLKQIAANAGKEGAIICQQVLSRSSSEGYDALRDAYTDMIEAGILDPTKVTRCALESAASVAGLLLTTEALIADIPEEKSSSAPAMPGAGMDY</sequence>
<reference key="1">
    <citation type="journal article" date="1989" name="J. Exp. Med.">
        <title>Chlamydial disease pathogenesis. The 57-kD chlamydial hypersensitivity antigen is a stress response protein.</title>
        <authorList>
            <person name="Morrison R.P."/>
            <person name="Belland R.J."/>
            <person name="Lyng K."/>
            <person name="Caldwell H.D."/>
        </authorList>
    </citation>
    <scope>NUCLEOTIDE SEQUENCE [GENOMIC DNA]</scope>
    <source>
        <strain>ATCC VR-813 / DSM 19441 / 03DC25 / GPIC</strain>
    </source>
</reference>
<reference key="2">
    <citation type="journal article" date="2003" name="Nucleic Acids Res.">
        <title>Genome sequence of Chlamydophila caviae (Chlamydia psittaci GPIC): examining the role of niche-specific genes in the evolution of the Chlamydiaceae.</title>
        <authorList>
            <person name="Read T.D."/>
            <person name="Myers G.S.A."/>
            <person name="Brunham R.C."/>
            <person name="Nelson W.C."/>
            <person name="Paulsen I.T."/>
            <person name="Heidelberg J.F."/>
            <person name="Holtzapple E.K."/>
            <person name="Khouri H.M."/>
            <person name="Federova N.B."/>
            <person name="Carty H.A."/>
            <person name="Umayam L.A."/>
            <person name="Haft D.H."/>
            <person name="Peterson J.D."/>
            <person name="Beanan M.J."/>
            <person name="White O."/>
            <person name="Salzberg S.L."/>
            <person name="Hsia R.-C."/>
            <person name="McClarty G."/>
            <person name="Rank R.G."/>
            <person name="Bavoil P.M."/>
            <person name="Fraser C.M."/>
        </authorList>
    </citation>
    <scope>NUCLEOTIDE SEQUENCE [LARGE SCALE GENOMIC DNA]</scope>
    <source>
        <strain>ATCC VR-813 / DSM 19441 / 03DC25 / GPIC</strain>
    </source>
</reference>
<accession>P15599</accession>
<feature type="chain" id="PRO_0000063329" description="Chaperonin GroEL 1">
    <location>
        <begin position="1"/>
        <end position="544"/>
    </location>
</feature>
<feature type="binding site" evidence="1">
    <location>
        <begin position="30"/>
        <end position="33"/>
    </location>
    <ligand>
        <name>ATP</name>
        <dbReference type="ChEBI" id="CHEBI:30616"/>
    </ligand>
</feature>
<feature type="binding site" evidence="1">
    <location>
        <position position="51"/>
    </location>
    <ligand>
        <name>ATP</name>
        <dbReference type="ChEBI" id="CHEBI:30616"/>
    </ligand>
</feature>
<feature type="binding site" evidence="1">
    <location>
        <begin position="87"/>
        <end position="91"/>
    </location>
    <ligand>
        <name>ATP</name>
        <dbReference type="ChEBI" id="CHEBI:30616"/>
    </ligand>
</feature>
<feature type="binding site" evidence="1">
    <location>
        <position position="415"/>
    </location>
    <ligand>
        <name>ATP</name>
        <dbReference type="ChEBI" id="CHEBI:30616"/>
    </ligand>
</feature>
<feature type="binding site" evidence="1">
    <location>
        <begin position="481"/>
        <end position="483"/>
    </location>
    <ligand>
        <name>ATP</name>
        <dbReference type="ChEBI" id="CHEBI:30616"/>
    </ligand>
</feature>
<feature type="binding site" evidence="1">
    <location>
        <position position="497"/>
    </location>
    <ligand>
        <name>ATP</name>
        <dbReference type="ChEBI" id="CHEBI:30616"/>
    </ligand>
</feature>
<comment type="function">
    <text evidence="1">Together with its co-chaperonin GroES, plays an essential role in assisting protein folding. The GroEL-GroES system forms a nano-cage that allows encapsulation of the non-native substrate proteins and provides a physical environment optimized to promote and accelerate protein folding.</text>
</comment>
<comment type="catalytic activity">
    <reaction evidence="1">
        <text>ATP + H2O + a folded polypeptide = ADP + phosphate + an unfolded polypeptide.</text>
        <dbReference type="EC" id="5.6.1.7"/>
    </reaction>
</comment>
<comment type="subunit">
    <text evidence="1">Forms a cylinder of 14 subunits composed of two heptameric rings stacked back-to-back. Interacts with the co-chaperonin GroES.</text>
</comment>
<comment type="subcellular location">
    <subcellularLocation>
        <location evidence="1">Cytoplasm</location>
    </subcellularLocation>
</comment>
<comment type="induction">
    <text>By stress.</text>
</comment>
<comment type="similarity">
    <text evidence="1">Belongs to the chaperonin (HSP60) family.</text>
</comment>
<proteinExistence type="evidence at transcript level"/>
<keyword id="KW-0067">ATP-binding</keyword>
<keyword id="KW-0143">Chaperone</keyword>
<keyword id="KW-0963">Cytoplasm</keyword>
<keyword id="KW-0413">Isomerase</keyword>
<keyword id="KW-0547">Nucleotide-binding</keyword>
<keyword id="KW-0346">Stress response</keyword>
<dbReference type="EC" id="5.6.1.7" evidence="1"/>
<dbReference type="EMBL" id="X51404">
    <property type="protein sequence ID" value="CAA35766.1"/>
    <property type="molecule type" value="Genomic_DNA"/>
</dbReference>
<dbReference type="EMBL" id="AE015925">
    <property type="protein sequence ID" value="AAP05385.1"/>
    <property type="molecule type" value="Genomic_DNA"/>
</dbReference>
<dbReference type="PIR" id="JL0117">
    <property type="entry name" value="JL0117"/>
</dbReference>
<dbReference type="RefSeq" id="WP_011006600.1">
    <property type="nucleotide sequence ID" value="NC_003361.3"/>
</dbReference>
<dbReference type="SMR" id="P15599"/>
<dbReference type="STRING" id="227941.CCA_00643"/>
<dbReference type="KEGG" id="cca:CCA_00643"/>
<dbReference type="eggNOG" id="COG0459">
    <property type="taxonomic scope" value="Bacteria"/>
</dbReference>
<dbReference type="HOGENOM" id="CLU_016503_3_0_0"/>
<dbReference type="OrthoDB" id="9766614at2"/>
<dbReference type="Proteomes" id="UP000002193">
    <property type="component" value="Chromosome"/>
</dbReference>
<dbReference type="GO" id="GO:0005737">
    <property type="term" value="C:cytoplasm"/>
    <property type="evidence" value="ECO:0007669"/>
    <property type="project" value="UniProtKB-SubCell"/>
</dbReference>
<dbReference type="GO" id="GO:0005524">
    <property type="term" value="F:ATP binding"/>
    <property type="evidence" value="ECO:0007669"/>
    <property type="project" value="UniProtKB-UniRule"/>
</dbReference>
<dbReference type="GO" id="GO:0140662">
    <property type="term" value="F:ATP-dependent protein folding chaperone"/>
    <property type="evidence" value="ECO:0007669"/>
    <property type="project" value="InterPro"/>
</dbReference>
<dbReference type="GO" id="GO:0016853">
    <property type="term" value="F:isomerase activity"/>
    <property type="evidence" value="ECO:0007669"/>
    <property type="project" value="UniProtKB-KW"/>
</dbReference>
<dbReference type="GO" id="GO:0051082">
    <property type="term" value="F:unfolded protein binding"/>
    <property type="evidence" value="ECO:0007669"/>
    <property type="project" value="UniProtKB-UniRule"/>
</dbReference>
<dbReference type="GO" id="GO:0042026">
    <property type="term" value="P:protein refolding"/>
    <property type="evidence" value="ECO:0007669"/>
    <property type="project" value="UniProtKB-UniRule"/>
</dbReference>
<dbReference type="CDD" id="cd03344">
    <property type="entry name" value="GroEL"/>
    <property type="match status" value="1"/>
</dbReference>
<dbReference type="FunFam" id="1.10.560.10:FF:000001">
    <property type="entry name" value="60 kDa chaperonin"/>
    <property type="match status" value="1"/>
</dbReference>
<dbReference type="FunFam" id="3.50.7.10:FF:000001">
    <property type="entry name" value="60 kDa chaperonin"/>
    <property type="match status" value="1"/>
</dbReference>
<dbReference type="Gene3D" id="3.50.7.10">
    <property type="entry name" value="GroEL"/>
    <property type="match status" value="1"/>
</dbReference>
<dbReference type="Gene3D" id="1.10.560.10">
    <property type="entry name" value="GroEL-like equatorial domain"/>
    <property type="match status" value="1"/>
</dbReference>
<dbReference type="Gene3D" id="3.30.260.10">
    <property type="entry name" value="TCP-1-like chaperonin intermediate domain"/>
    <property type="match status" value="1"/>
</dbReference>
<dbReference type="HAMAP" id="MF_00600">
    <property type="entry name" value="CH60"/>
    <property type="match status" value="1"/>
</dbReference>
<dbReference type="InterPro" id="IPR018370">
    <property type="entry name" value="Chaperonin_Cpn60_CS"/>
</dbReference>
<dbReference type="InterPro" id="IPR001844">
    <property type="entry name" value="Cpn60/GroEL"/>
</dbReference>
<dbReference type="InterPro" id="IPR002423">
    <property type="entry name" value="Cpn60/GroEL/TCP-1"/>
</dbReference>
<dbReference type="InterPro" id="IPR027409">
    <property type="entry name" value="GroEL-like_apical_dom_sf"/>
</dbReference>
<dbReference type="InterPro" id="IPR027413">
    <property type="entry name" value="GROEL-like_equatorial_sf"/>
</dbReference>
<dbReference type="InterPro" id="IPR027410">
    <property type="entry name" value="TCP-1-like_intermed_sf"/>
</dbReference>
<dbReference type="NCBIfam" id="TIGR02348">
    <property type="entry name" value="GroEL"/>
    <property type="match status" value="1"/>
</dbReference>
<dbReference type="NCBIfam" id="NF000592">
    <property type="entry name" value="PRK00013.1"/>
    <property type="match status" value="1"/>
</dbReference>
<dbReference type="NCBIfam" id="NF009487">
    <property type="entry name" value="PRK12849.1"/>
    <property type="match status" value="1"/>
</dbReference>
<dbReference type="NCBIfam" id="NF009488">
    <property type="entry name" value="PRK12850.1"/>
    <property type="match status" value="1"/>
</dbReference>
<dbReference type="NCBIfam" id="NF009489">
    <property type="entry name" value="PRK12851.1"/>
    <property type="match status" value="1"/>
</dbReference>
<dbReference type="PANTHER" id="PTHR45633">
    <property type="entry name" value="60 KDA HEAT SHOCK PROTEIN, MITOCHONDRIAL"/>
    <property type="match status" value="1"/>
</dbReference>
<dbReference type="Pfam" id="PF00118">
    <property type="entry name" value="Cpn60_TCP1"/>
    <property type="match status" value="1"/>
</dbReference>
<dbReference type="PRINTS" id="PR00298">
    <property type="entry name" value="CHAPERONIN60"/>
</dbReference>
<dbReference type="SUPFAM" id="SSF52029">
    <property type="entry name" value="GroEL apical domain-like"/>
    <property type="match status" value="1"/>
</dbReference>
<dbReference type="SUPFAM" id="SSF48592">
    <property type="entry name" value="GroEL equatorial domain-like"/>
    <property type="match status" value="1"/>
</dbReference>
<dbReference type="SUPFAM" id="SSF54849">
    <property type="entry name" value="GroEL-intermediate domain like"/>
    <property type="match status" value="1"/>
</dbReference>
<dbReference type="PROSITE" id="PS00296">
    <property type="entry name" value="CHAPERONINS_CPN60"/>
    <property type="match status" value="1"/>
</dbReference>
<name>CH601_CHLCV</name>